<organism>
    <name type="scientific">Pseudomonas aeruginosa (strain ATCC 15692 / DSM 22644 / CIP 104116 / JCM 14847 / LMG 12228 / 1C / PRS 101 / PAO1)</name>
    <dbReference type="NCBI Taxonomy" id="208964"/>
    <lineage>
        <taxon>Bacteria</taxon>
        <taxon>Pseudomonadati</taxon>
        <taxon>Pseudomonadota</taxon>
        <taxon>Gammaproteobacteria</taxon>
        <taxon>Pseudomonadales</taxon>
        <taxon>Pseudomonadaceae</taxon>
        <taxon>Pseudomonas</taxon>
    </lineage>
</organism>
<reference key="1">
    <citation type="journal article" date="1998" name="J. Bacteriol.">
        <title>Expression cloning of a Pseudomonas gene encoding a hydroxydecanoyl-acyl carrier protein-dependent UDP-GlcNAc acyltransferase.</title>
        <authorList>
            <person name="Dotson G.D."/>
            <person name="Kaltashov I.A."/>
            <person name="Cotter R.J."/>
            <person name="Raetz C.R.H."/>
        </authorList>
    </citation>
    <scope>NUCLEOTIDE SEQUENCE [GENOMIC DNA]</scope>
    <source>
        <strain>ATCC 15692 / DSM 22644 / CIP 104116 / JCM 14847 / LMG 12228 / 1C / PRS 101 / PAO1</strain>
    </source>
</reference>
<reference key="2">
    <citation type="journal article" date="2000" name="Nature">
        <title>Complete genome sequence of Pseudomonas aeruginosa PAO1, an opportunistic pathogen.</title>
        <authorList>
            <person name="Stover C.K."/>
            <person name="Pham X.-Q.T."/>
            <person name="Erwin A.L."/>
            <person name="Mizoguchi S.D."/>
            <person name="Warrener P."/>
            <person name="Hickey M.J."/>
            <person name="Brinkman F.S.L."/>
            <person name="Hufnagle W.O."/>
            <person name="Kowalik D.J."/>
            <person name="Lagrou M."/>
            <person name="Garber R.L."/>
            <person name="Goltry L."/>
            <person name="Tolentino E."/>
            <person name="Westbrock-Wadman S."/>
            <person name="Yuan Y."/>
            <person name="Brody L.L."/>
            <person name="Coulter S.N."/>
            <person name="Folger K.R."/>
            <person name="Kas A."/>
            <person name="Larbig K."/>
            <person name="Lim R.M."/>
            <person name="Smith K.A."/>
            <person name="Spencer D.H."/>
            <person name="Wong G.K.-S."/>
            <person name="Wu Z."/>
            <person name="Paulsen I.T."/>
            <person name="Reizer J."/>
            <person name="Saier M.H. Jr."/>
            <person name="Hancock R.E.W."/>
            <person name="Lory S."/>
            <person name="Olson M.V."/>
        </authorList>
    </citation>
    <scope>NUCLEOTIDE SEQUENCE [LARGE SCALE GENOMIC DNA]</scope>
    <source>
        <strain>ATCC 15692 / DSM 22644 / CIP 104116 / JCM 14847 / LMG 12228 / 1C / PRS 101 / PAO1</strain>
    </source>
</reference>
<sequence length="258" mass="28010">MSLIDPRAIIDPSARLAADVQVGPWSIVGAEVEIGEGTVIGPHVVLKGPTKIGKHNRIYQFSSVGEDTPDLKYKGEPTRLVIGDHNVIREGVTIHRGTVQDRAETTIGDHNLIMAYAHIGHDSVIGNHCILVNNTALAGHVHVDDWAILSGYTLVHQYCRIGAHSFSGMGSAIGKDVPAYVTVFGNPAEARSMNFEGMRRRGFSSEAIHALRRAYKVVYRQGHTVEEALAELAESAAQFPEVAVFRDSIQSATRGITR</sequence>
<gene>
    <name evidence="1" type="primary">lpxA</name>
    <name type="ordered locus">PA3644</name>
</gene>
<comment type="function">
    <text evidence="1">Involved in the biosynthesis of lipid A, a phosphorylated glycolipid that anchors the lipopolysaccharide to the outer membrane of the cell.</text>
</comment>
<comment type="catalytic activity">
    <reaction evidence="1">
        <text>a (3R)-hydroxyacyl-[ACP] + UDP-N-acetyl-alpha-D-glucosamine = a UDP-3-O-[(3R)-3-hydroxyacyl]-N-acetyl-alpha-D-glucosamine + holo-[ACP]</text>
        <dbReference type="Rhea" id="RHEA:67812"/>
        <dbReference type="Rhea" id="RHEA-COMP:9685"/>
        <dbReference type="Rhea" id="RHEA-COMP:9945"/>
        <dbReference type="ChEBI" id="CHEBI:57705"/>
        <dbReference type="ChEBI" id="CHEBI:64479"/>
        <dbReference type="ChEBI" id="CHEBI:78827"/>
        <dbReference type="ChEBI" id="CHEBI:173225"/>
        <dbReference type="EC" id="2.3.1.129"/>
    </reaction>
</comment>
<comment type="pathway">
    <text evidence="1">Glycolipid biosynthesis; lipid IV(A) biosynthesis; lipid IV(A) from (3R)-3-hydroxytetradecanoyl-[acyl-carrier-protein] and UDP-N-acetyl-alpha-D-glucosamine: step 1/6.</text>
</comment>
<comment type="subunit">
    <text evidence="1">Homotrimer.</text>
</comment>
<comment type="subcellular location">
    <subcellularLocation>
        <location evidence="1">Cytoplasm</location>
    </subcellularLocation>
</comment>
<comment type="similarity">
    <text evidence="1">Belongs to the transferase hexapeptide repeat family. LpxA subfamily.</text>
</comment>
<evidence type="ECO:0000255" key="1">
    <source>
        <dbReference type="HAMAP-Rule" id="MF_00387"/>
    </source>
</evidence>
<keyword id="KW-0012">Acyltransferase</keyword>
<keyword id="KW-0963">Cytoplasm</keyword>
<keyword id="KW-0441">Lipid A biosynthesis</keyword>
<keyword id="KW-0444">Lipid biosynthesis</keyword>
<keyword id="KW-0443">Lipid metabolism</keyword>
<keyword id="KW-1185">Reference proteome</keyword>
<keyword id="KW-0677">Repeat</keyword>
<keyword id="KW-0808">Transferase</keyword>
<protein>
    <recommendedName>
        <fullName evidence="1">Acyl-[acyl-carrier-protein]--UDP-N-acetylglucosamine O-acyltransferase</fullName>
        <shortName evidence="1">UDP-N-acetylglucosamine acyltransferase</shortName>
        <ecNumber evidence="1">2.3.1.129</ecNumber>
    </recommendedName>
</protein>
<proteinExistence type="inferred from homology"/>
<accession>Q9X6P4</accession>
<name>LPXA_PSEAE</name>
<feature type="chain" id="PRO_0000188058" description="Acyl-[acyl-carrier-protein]--UDP-N-acetylglucosamine O-acyltransferase">
    <location>
        <begin position="1"/>
        <end position="258"/>
    </location>
</feature>
<dbReference type="EC" id="2.3.1.129" evidence="1"/>
<dbReference type="EMBL" id="AF142597">
    <property type="protein sequence ID" value="AAD30149.1"/>
    <property type="molecule type" value="Genomic_DNA"/>
</dbReference>
<dbReference type="EMBL" id="AE004091">
    <property type="protein sequence ID" value="AAG07032.1"/>
    <property type="molecule type" value="Genomic_DNA"/>
</dbReference>
<dbReference type="PIR" id="D83190">
    <property type="entry name" value="D83190"/>
</dbReference>
<dbReference type="RefSeq" id="NP_252334.1">
    <property type="nucleotide sequence ID" value="NC_002516.2"/>
</dbReference>
<dbReference type="RefSeq" id="WP_003092373.1">
    <property type="nucleotide sequence ID" value="NZ_QZGE01000001.1"/>
</dbReference>
<dbReference type="SMR" id="Q9X6P4"/>
<dbReference type="FunCoup" id="Q9X6P4">
    <property type="interactions" value="514"/>
</dbReference>
<dbReference type="STRING" id="208964.PA3644"/>
<dbReference type="PaxDb" id="208964-PA3644"/>
<dbReference type="GeneID" id="880493"/>
<dbReference type="KEGG" id="pae:PA3644"/>
<dbReference type="PATRIC" id="fig|208964.12.peg.3813"/>
<dbReference type="PseudoCAP" id="PA3644"/>
<dbReference type="HOGENOM" id="CLU_061249_0_0_6"/>
<dbReference type="InParanoid" id="Q9X6P4"/>
<dbReference type="OrthoDB" id="9807278at2"/>
<dbReference type="PhylomeDB" id="Q9X6P4"/>
<dbReference type="BioCyc" id="PAER208964:G1FZ6-3714-MONOMER"/>
<dbReference type="UniPathway" id="UPA00359">
    <property type="reaction ID" value="UER00477"/>
</dbReference>
<dbReference type="PHI-base" id="PHI:3785"/>
<dbReference type="Proteomes" id="UP000002438">
    <property type="component" value="Chromosome"/>
</dbReference>
<dbReference type="GO" id="GO:0005737">
    <property type="term" value="C:cytoplasm"/>
    <property type="evidence" value="ECO:0007669"/>
    <property type="project" value="UniProtKB-SubCell"/>
</dbReference>
<dbReference type="GO" id="GO:0016020">
    <property type="term" value="C:membrane"/>
    <property type="evidence" value="ECO:0007669"/>
    <property type="project" value="GOC"/>
</dbReference>
<dbReference type="GO" id="GO:0008780">
    <property type="term" value="F:acyl-[acyl-carrier-protein]-UDP-N-acetylglucosamine O-acyltransferase activity"/>
    <property type="evidence" value="ECO:0007669"/>
    <property type="project" value="UniProtKB-UniRule"/>
</dbReference>
<dbReference type="GO" id="GO:0009245">
    <property type="term" value="P:lipid A biosynthetic process"/>
    <property type="evidence" value="ECO:0007669"/>
    <property type="project" value="UniProtKB-UniRule"/>
</dbReference>
<dbReference type="GO" id="GO:0009103">
    <property type="term" value="P:lipopolysaccharide biosynthetic process"/>
    <property type="evidence" value="ECO:0000314"/>
    <property type="project" value="PseudoCAP"/>
</dbReference>
<dbReference type="CDD" id="cd03351">
    <property type="entry name" value="LbH_UDP-GlcNAc_AT"/>
    <property type="match status" value="1"/>
</dbReference>
<dbReference type="FunFam" id="1.20.1180.10:FF:000001">
    <property type="entry name" value="Acyl-[acyl-carrier-protein]--UDP-N-acetylglucosamine O-acyltransferase"/>
    <property type="match status" value="1"/>
</dbReference>
<dbReference type="FunFam" id="2.160.10.10:FF:000003">
    <property type="entry name" value="Acyl-[acyl-carrier-protein]--UDP-N-acetylglucosamine O-acyltransferase"/>
    <property type="match status" value="1"/>
</dbReference>
<dbReference type="Gene3D" id="2.160.10.10">
    <property type="entry name" value="Hexapeptide repeat proteins"/>
    <property type="match status" value="1"/>
</dbReference>
<dbReference type="Gene3D" id="1.20.1180.10">
    <property type="entry name" value="Udp N-acetylglucosamine O-acyltransferase, C-terminal domain"/>
    <property type="match status" value="1"/>
</dbReference>
<dbReference type="HAMAP" id="MF_00387">
    <property type="entry name" value="LpxA"/>
    <property type="match status" value="1"/>
</dbReference>
<dbReference type="InterPro" id="IPR029098">
    <property type="entry name" value="Acetyltransf_C"/>
</dbReference>
<dbReference type="InterPro" id="IPR037157">
    <property type="entry name" value="Acetyltransf_C_sf"/>
</dbReference>
<dbReference type="InterPro" id="IPR001451">
    <property type="entry name" value="Hexapep"/>
</dbReference>
<dbReference type="InterPro" id="IPR018357">
    <property type="entry name" value="Hexapep_transf_CS"/>
</dbReference>
<dbReference type="InterPro" id="IPR010137">
    <property type="entry name" value="Lipid_A_LpxA"/>
</dbReference>
<dbReference type="InterPro" id="IPR011004">
    <property type="entry name" value="Trimer_LpxA-like_sf"/>
</dbReference>
<dbReference type="NCBIfam" id="TIGR01852">
    <property type="entry name" value="lipid_A_lpxA"/>
    <property type="match status" value="1"/>
</dbReference>
<dbReference type="NCBIfam" id="NF003657">
    <property type="entry name" value="PRK05289.1"/>
    <property type="match status" value="1"/>
</dbReference>
<dbReference type="PANTHER" id="PTHR43480">
    <property type="entry name" value="ACYL-[ACYL-CARRIER-PROTEIN]--UDP-N-ACETYLGLUCOSAMINE O-ACYLTRANSFERASE"/>
    <property type="match status" value="1"/>
</dbReference>
<dbReference type="PANTHER" id="PTHR43480:SF1">
    <property type="entry name" value="ACYL-[ACYL-CARRIER-PROTEIN]--UDP-N-ACETYLGLUCOSAMINE O-ACYLTRANSFERASE, MITOCHONDRIAL-RELATED"/>
    <property type="match status" value="1"/>
</dbReference>
<dbReference type="Pfam" id="PF13720">
    <property type="entry name" value="Acetyltransf_11"/>
    <property type="match status" value="1"/>
</dbReference>
<dbReference type="Pfam" id="PF00132">
    <property type="entry name" value="Hexapep"/>
    <property type="match status" value="2"/>
</dbReference>
<dbReference type="PIRSF" id="PIRSF000456">
    <property type="entry name" value="UDP-GlcNAc_acltr"/>
    <property type="match status" value="1"/>
</dbReference>
<dbReference type="SUPFAM" id="SSF51161">
    <property type="entry name" value="Trimeric LpxA-like enzymes"/>
    <property type="match status" value="1"/>
</dbReference>
<dbReference type="PROSITE" id="PS00101">
    <property type="entry name" value="HEXAPEP_TRANSFERASES"/>
    <property type="match status" value="1"/>
</dbReference>